<feature type="chain" id="PRO_0000250257" description="Undecaprenyl-diphosphatase">
    <location>
        <begin position="1"/>
        <end position="268"/>
    </location>
</feature>
<feature type="transmembrane region" description="Helical" evidence="1">
    <location>
        <begin position="9"/>
        <end position="29"/>
    </location>
</feature>
<feature type="transmembrane region" description="Helical" evidence="1">
    <location>
        <begin position="47"/>
        <end position="67"/>
    </location>
</feature>
<feature type="transmembrane region" description="Helical" evidence="1">
    <location>
        <begin position="83"/>
        <end position="103"/>
    </location>
</feature>
<feature type="transmembrane region" description="Helical" evidence="1">
    <location>
        <begin position="107"/>
        <end position="127"/>
    </location>
</feature>
<feature type="transmembrane region" description="Helical" evidence="1">
    <location>
        <begin position="144"/>
        <end position="164"/>
    </location>
</feature>
<feature type="transmembrane region" description="Helical" evidence="1">
    <location>
        <begin position="184"/>
        <end position="204"/>
    </location>
</feature>
<feature type="transmembrane region" description="Helical" evidence="1">
    <location>
        <begin position="218"/>
        <end position="238"/>
    </location>
</feature>
<feature type="transmembrane region" description="Helical" evidence="1">
    <location>
        <begin position="246"/>
        <end position="266"/>
    </location>
</feature>
<dbReference type="EC" id="3.6.1.27" evidence="1"/>
<dbReference type="EMBL" id="CP000250">
    <property type="protein sequence ID" value="ABD05372.1"/>
    <property type="molecule type" value="Genomic_DNA"/>
</dbReference>
<dbReference type="RefSeq" id="WP_011439562.1">
    <property type="nucleotide sequence ID" value="NC_007778.1"/>
</dbReference>
<dbReference type="SMR" id="Q2J2D8"/>
<dbReference type="STRING" id="316058.RPB_0661"/>
<dbReference type="KEGG" id="rpb:RPB_0661"/>
<dbReference type="eggNOG" id="COG1968">
    <property type="taxonomic scope" value="Bacteria"/>
</dbReference>
<dbReference type="HOGENOM" id="CLU_060296_2_0_5"/>
<dbReference type="OrthoDB" id="9808289at2"/>
<dbReference type="Proteomes" id="UP000008809">
    <property type="component" value="Chromosome"/>
</dbReference>
<dbReference type="GO" id="GO:0005886">
    <property type="term" value="C:plasma membrane"/>
    <property type="evidence" value="ECO:0007669"/>
    <property type="project" value="UniProtKB-SubCell"/>
</dbReference>
<dbReference type="GO" id="GO:0050380">
    <property type="term" value="F:undecaprenyl-diphosphatase activity"/>
    <property type="evidence" value="ECO:0007669"/>
    <property type="project" value="UniProtKB-UniRule"/>
</dbReference>
<dbReference type="GO" id="GO:0071555">
    <property type="term" value="P:cell wall organization"/>
    <property type="evidence" value="ECO:0007669"/>
    <property type="project" value="UniProtKB-KW"/>
</dbReference>
<dbReference type="GO" id="GO:0009252">
    <property type="term" value="P:peptidoglycan biosynthetic process"/>
    <property type="evidence" value="ECO:0007669"/>
    <property type="project" value="UniProtKB-KW"/>
</dbReference>
<dbReference type="GO" id="GO:0008360">
    <property type="term" value="P:regulation of cell shape"/>
    <property type="evidence" value="ECO:0007669"/>
    <property type="project" value="UniProtKB-KW"/>
</dbReference>
<dbReference type="GO" id="GO:0046677">
    <property type="term" value="P:response to antibiotic"/>
    <property type="evidence" value="ECO:0007669"/>
    <property type="project" value="UniProtKB-UniRule"/>
</dbReference>
<dbReference type="HAMAP" id="MF_01006">
    <property type="entry name" value="Undec_diphosphatase"/>
    <property type="match status" value="1"/>
</dbReference>
<dbReference type="InterPro" id="IPR003824">
    <property type="entry name" value="UppP"/>
</dbReference>
<dbReference type="NCBIfam" id="NF001389">
    <property type="entry name" value="PRK00281.1-2"/>
    <property type="match status" value="1"/>
</dbReference>
<dbReference type="NCBIfam" id="NF001390">
    <property type="entry name" value="PRK00281.1-4"/>
    <property type="match status" value="1"/>
</dbReference>
<dbReference type="NCBIfam" id="TIGR00753">
    <property type="entry name" value="undec_PP_bacA"/>
    <property type="match status" value="1"/>
</dbReference>
<dbReference type="PANTHER" id="PTHR30622">
    <property type="entry name" value="UNDECAPRENYL-DIPHOSPHATASE"/>
    <property type="match status" value="1"/>
</dbReference>
<dbReference type="PANTHER" id="PTHR30622:SF3">
    <property type="entry name" value="UNDECAPRENYL-DIPHOSPHATASE"/>
    <property type="match status" value="1"/>
</dbReference>
<dbReference type="Pfam" id="PF02673">
    <property type="entry name" value="BacA"/>
    <property type="match status" value="1"/>
</dbReference>
<reference key="1">
    <citation type="submission" date="2006-01" db="EMBL/GenBank/DDBJ databases">
        <title>Complete sequence of Rhodopseudomonas palustris HaA2.</title>
        <authorList>
            <consortium name="US DOE Joint Genome Institute"/>
            <person name="Copeland A."/>
            <person name="Lucas S."/>
            <person name="Lapidus A."/>
            <person name="Barry K."/>
            <person name="Detter J.C."/>
            <person name="Glavina T."/>
            <person name="Hammon N."/>
            <person name="Israni S."/>
            <person name="Pitluck S."/>
            <person name="Chain P."/>
            <person name="Malfatti S."/>
            <person name="Shin M."/>
            <person name="Vergez L."/>
            <person name="Schmutz J."/>
            <person name="Larimer F."/>
            <person name="Land M."/>
            <person name="Hauser L."/>
            <person name="Pelletier D.A."/>
            <person name="Kyrpides N."/>
            <person name="Anderson I."/>
            <person name="Oda Y."/>
            <person name="Harwood C.S."/>
            <person name="Richardson P."/>
        </authorList>
    </citation>
    <scope>NUCLEOTIDE SEQUENCE [LARGE SCALE GENOMIC DNA]</scope>
    <source>
        <strain>HaA2</strain>
    </source>
</reference>
<name>UPPP_RHOP2</name>
<organism>
    <name type="scientific">Rhodopseudomonas palustris (strain HaA2)</name>
    <dbReference type="NCBI Taxonomy" id="316058"/>
    <lineage>
        <taxon>Bacteria</taxon>
        <taxon>Pseudomonadati</taxon>
        <taxon>Pseudomonadota</taxon>
        <taxon>Alphaproteobacteria</taxon>
        <taxon>Hyphomicrobiales</taxon>
        <taxon>Nitrobacteraceae</taxon>
        <taxon>Rhodopseudomonas</taxon>
    </lineage>
</organism>
<protein>
    <recommendedName>
        <fullName evidence="1">Undecaprenyl-diphosphatase</fullName>
        <ecNumber evidence="1">3.6.1.27</ecNumber>
    </recommendedName>
    <alternativeName>
        <fullName evidence="1">Bacitracin resistance protein</fullName>
    </alternativeName>
    <alternativeName>
        <fullName evidence="1">Undecaprenyl pyrophosphate phosphatase</fullName>
    </alternativeName>
</protein>
<comment type="function">
    <text evidence="1">Catalyzes the dephosphorylation of undecaprenyl diphosphate (UPP). Confers resistance to bacitracin.</text>
</comment>
<comment type="catalytic activity">
    <reaction evidence="1">
        <text>di-trans,octa-cis-undecaprenyl diphosphate + H2O = di-trans,octa-cis-undecaprenyl phosphate + phosphate + H(+)</text>
        <dbReference type="Rhea" id="RHEA:28094"/>
        <dbReference type="ChEBI" id="CHEBI:15377"/>
        <dbReference type="ChEBI" id="CHEBI:15378"/>
        <dbReference type="ChEBI" id="CHEBI:43474"/>
        <dbReference type="ChEBI" id="CHEBI:58405"/>
        <dbReference type="ChEBI" id="CHEBI:60392"/>
        <dbReference type="EC" id="3.6.1.27"/>
    </reaction>
</comment>
<comment type="subcellular location">
    <subcellularLocation>
        <location evidence="1">Cell inner membrane</location>
        <topology evidence="1">Multi-pass membrane protein</topology>
    </subcellularLocation>
</comment>
<comment type="miscellaneous">
    <text>Bacitracin is thought to be involved in the inhibition of peptidoglycan synthesis by sequestering undecaprenyl diphosphate, thereby reducing the pool of lipid carrier available.</text>
</comment>
<comment type="similarity">
    <text evidence="1">Belongs to the UppP family.</text>
</comment>
<accession>Q2J2D8</accession>
<gene>
    <name evidence="1" type="primary">uppP</name>
    <name type="ordered locus">RPB_0661</name>
</gene>
<keyword id="KW-0046">Antibiotic resistance</keyword>
<keyword id="KW-0997">Cell inner membrane</keyword>
<keyword id="KW-1003">Cell membrane</keyword>
<keyword id="KW-0133">Cell shape</keyword>
<keyword id="KW-0961">Cell wall biogenesis/degradation</keyword>
<keyword id="KW-0378">Hydrolase</keyword>
<keyword id="KW-0472">Membrane</keyword>
<keyword id="KW-0573">Peptidoglycan synthesis</keyword>
<keyword id="KW-1185">Reference proteome</keyword>
<keyword id="KW-0812">Transmembrane</keyword>
<keyword id="KW-1133">Transmembrane helix</keyword>
<evidence type="ECO:0000255" key="1">
    <source>
        <dbReference type="HAMAP-Rule" id="MF_01006"/>
    </source>
</evidence>
<sequence>MLSDIIRAVILGVVEGVTEFLPVSSTGHLLLVGRFFNLGEGDFWKTFDVLIQLGAILAILALYFAKLWRIALGMFSDPAAQRFIIGVLVAFLPAAVIGAAAGSYIKLFLFNPWVVCFSLIVGGAVLLWVDQLDLKPRHHDATTFPVLMYFYIGCAQCVAMIPGVSRSGASIVAAMLFGADKRAAAEFSFFLAIPTMVGAFVYDLYKSRADLTTDHMTIVAVGFVVSFITAIIVVKTFLGYVTRHGFQLFAWWRVVVGTLGLIALAMGR</sequence>
<proteinExistence type="inferred from homology"/>